<comment type="function">
    <text evidence="1">RNA chaperone with significant RNA binding, RNA strand exchange and RNA duplexing activities. May regulate ProP activity through an RNA-based, post-transcriptional mechanism.</text>
</comment>
<comment type="subcellular location">
    <subcellularLocation>
        <location evidence="1">Cytoplasm</location>
    </subcellularLocation>
</comment>
<comment type="similarity">
    <text evidence="1">Belongs to the ProQ family.</text>
</comment>
<gene>
    <name evidence="1" type="primary">proQ</name>
    <name type="ordered locus">YPN_1926</name>
    <name type="ORF">YP516_2143</name>
</gene>
<name>PROQ_YERPN</name>
<proteinExistence type="inferred from homology"/>
<organism>
    <name type="scientific">Yersinia pestis bv. Antiqua (strain Nepal516)</name>
    <dbReference type="NCBI Taxonomy" id="377628"/>
    <lineage>
        <taxon>Bacteria</taxon>
        <taxon>Pseudomonadati</taxon>
        <taxon>Pseudomonadota</taxon>
        <taxon>Gammaproteobacteria</taxon>
        <taxon>Enterobacterales</taxon>
        <taxon>Yersiniaceae</taxon>
        <taxon>Yersinia</taxon>
    </lineage>
</organism>
<sequence>MENQPKLNSSKEVIAFLAERFPLCFTAEGEARPLKIGIFQDLVERVQGEENLSKTQLRSALRLYTSSWRYLYGVKVGAERVDLDGNPCGVLEEQHVEHARKQLEEAKARVQAQRAEQQAKKREAAIAAGETPEPRRPRPAGKKPAPRREAGAAPENRKPRQSPRPQQVRPPRPQVEENQPRPVPVTDISKLQIGQEIKVRAGKSAMDATVLEIAKDGVRVQLSSGLAMIVRAEHLQF</sequence>
<accession>Q1CIC5</accession>
<accession>C4GTN5</accession>
<reference key="1">
    <citation type="journal article" date="2006" name="J. Bacteriol.">
        <title>Complete genome sequence of Yersinia pestis strains Antiqua and Nepal516: evidence of gene reduction in an emerging pathogen.</title>
        <authorList>
            <person name="Chain P.S.G."/>
            <person name="Hu P."/>
            <person name="Malfatti S.A."/>
            <person name="Radnedge L."/>
            <person name="Larimer F."/>
            <person name="Vergez L.M."/>
            <person name="Worsham P."/>
            <person name="Chu M.C."/>
            <person name="Andersen G.L."/>
        </authorList>
    </citation>
    <scope>NUCLEOTIDE SEQUENCE [LARGE SCALE GENOMIC DNA]</scope>
    <source>
        <strain>Nepal516</strain>
    </source>
</reference>
<reference key="2">
    <citation type="submission" date="2009-04" db="EMBL/GenBank/DDBJ databases">
        <title>Yersinia pestis Nepal516A whole genome shotgun sequencing project.</title>
        <authorList>
            <person name="Plunkett G. III"/>
            <person name="Anderson B.D."/>
            <person name="Baumler D.J."/>
            <person name="Burland V."/>
            <person name="Cabot E.L."/>
            <person name="Glasner J.D."/>
            <person name="Mau B."/>
            <person name="Neeno-Eckwall E."/>
            <person name="Perna N.T."/>
            <person name="Munk A.C."/>
            <person name="Tapia R."/>
            <person name="Green L.D."/>
            <person name="Rogers Y.C."/>
            <person name="Detter J.C."/>
            <person name="Bruce D.C."/>
            <person name="Brettin T.S."/>
        </authorList>
    </citation>
    <scope>NUCLEOTIDE SEQUENCE [LARGE SCALE GENOMIC DNA]</scope>
    <source>
        <strain>Nepal516</strain>
    </source>
</reference>
<protein>
    <recommendedName>
        <fullName evidence="1">RNA chaperone ProQ</fullName>
    </recommendedName>
</protein>
<evidence type="ECO:0000255" key="1">
    <source>
        <dbReference type="HAMAP-Rule" id="MF_00749"/>
    </source>
</evidence>
<evidence type="ECO:0000256" key="2">
    <source>
        <dbReference type="SAM" id="MobiDB-lite"/>
    </source>
</evidence>
<dbReference type="EMBL" id="CP000305">
    <property type="protein sequence ID" value="ABG18255.1"/>
    <property type="molecule type" value="Genomic_DNA"/>
</dbReference>
<dbReference type="EMBL" id="ACNQ01000011">
    <property type="protein sequence ID" value="EEO76549.1"/>
    <property type="molecule type" value="Genomic_DNA"/>
</dbReference>
<dbReference type="RefSeq" id="WP_002210849.1">
    <property type="nucleotide sequence ID" value="NZ_ACNQ01000011.1"/>
</dbReference>
<dbReference type="SMR" id="Q1CIC5"/>
<dbReference type="GeneID" id="96665860"/>
<dbReference type="KEGG" id="ypn:YPN_1926"/>
<dbReference type="HOGENOM" id="CLU_113254_0_0_6"/>
<dbReference type="Proteomes" id="UP000008936">
    <property type="component" value="Chromosome"/>
</dbReference>
<dbReference type="GO" id="GO:0005829">
    <property type="term" value="C:cytosol"/>
    <property type="evidence" value="ECO:0007669"/>
    <property type="project" value="TreeGrafter"/>
</dbReference>
<dbReference type="GO" id="GO:0033592">
    <property type="term" value="F:RNA strand annealing activity"/>
    <property type="evidence" value="ECO:0007669"/>
    <property type="project" value="UniProtKB-UniRule"/>
</dbReference>
<dbReference type="GO" id="GO:0034057">
    <property type="term" value="F:RNA strand-exchange activity"/>
    <property type="evidence" value="ECO:0007669"/>
    <property type="project" value="UniProtKB-UniRule"/>
</dbReference>
<dbReference type="GO" id="GO:0010608">
    <property type="term" value="P:post-transcriptional regulation of gene expression"/>
    <property type="evidence" value="ECO:0007669"/>
    <property type="project" value="InterPro"/>
</dbReference>
<dbReference type="FunFam" id="1.10.1710.10:FF:000001">
    <property type="entry name" value="RNA chaperone ProQ"/>
    <property type="match status" value="1"/>
</dbReference>
<dbReference type="Gene3D" id="1.10.1710.10">
    <property type="entry name" value="ProQ/FinO domain"/>
    <property type="match status" value="1"/>
</dbReference>
<dbReference type="HAMAP" id="MF_00749">
    <property type="entry name" value="ProQ"/>
    <property type="match status" value="1"/>
</dbReference>
<dbReference type="InterPro" id="IPR023529">
    <property type="entry name" value="ProQ"/>
</dbReference>
<dbReference type="InterPro" id="IPR016103">
    <property type="entry name" value="ProQ/FinO"/>
</dbReference>
<dbReference type="InterPro" id="IPR036442">
    <property type="entry name" value="ProQ/FinO_sf"/>
</dbReference>
<dbReference type="InterPro" id="IPR035236">
    <property type="entry name" value="ProQ_C"/>
</dbReference>
<dbReference type="NCBIfam" id="NF003434">
    <property type="entry name" value="PRK04950.1"/>
    <property type="match status" value="1"/>
</dbReference>
<dbReference type="PANTHER" id="PTHR38106">
    <property type="entry name" value="RNA CHAPERONE PROQ"/>
    <property type="match status" value="1"/>
</dbReference>
<dbReference type="PANTHER" id="PTHR38106:SF1">
    <property type="entry name" value="RNA CHAPERONE PROQ"/>
    <property type="match status" value="1"/>
</dbReference>
<dbReference type="Pfam" id="PF04352">
    <property type="entry name" value="ProQ"/>
    <property type="match status" value="1"/>
</dbReference>
<dbReference type="Pfam" id="PF17516">
    <property type="entry name" value="ProQ_C"/>
    <property type="match status" value="1"/>
</dbReference>
<dbReference type="SMART" id="SM00945">
    <property type="entry name" value="ProQ"/>
    <property type="match status" value="1"/>
</dbReference>
<dbReference type="SUPFAM" id="SSF48657">
    <property type="entry name" value="FinO-like"/>
    <property type="match status" value="1"/>
</dbReference>
<keyword id="KW-0143">Chaperone</keyword>
<keyword id="KW-0963">Cytoplasm</keyword>
<keyword id="KW-0694">RNA-binding</keyword>
<feature type="chain" id="PRO_0000303105" description="RNA chaperone ProQ">
    <location>
        <begin position="1"/>
        <end position="237"/>
    </location>
</feature>
<feature type="region of interest" description="Disordered" evidence="2">
    <location>
        <begin position="106"/>
        <end position="188"/>
    </location>
</feature>
<feature type="compositionally biased region" description="Basic and acidic residues" evidence="2">
    <location>
        <begin position="146"/>
        <end position="158"/>
    </location>
</feature>